<feature type="chain" id="PRO_0000278400" description="DNA replication complex GINS protein PSF1">
    <location>
        <begin position="1"/>
        <end position="232"/>
    </location>
</feature>
<reference key="1">
    <citation type="journal article" date="2004" name="Nature">
        <title>Genome evolution in yeasts.</title>
        <authorList>
            <person name="Dujon B."/>
            <person name="Sherman D."/>
            <person name="Fischer G."/>
            <person name="Durrens P."/>
            <person name="Casaregola S."/>
            <person name="Lafontaine I."/>
            <person name="de Montigny J."/>
            <person name="Marck C."/>
            <person name="Neuveglise C."/>
            <person name="Talla E."/>
            <person name="Goffard N."/>
            <person name="Frangeul L."/>
            <person name="Aigle M."/>
            <person name="Anthouard V."/>
            <person name="Babour A."/>
            <person name="Barbe V."/>
            <person name="Barnay S."/>
            <person name="Blanchin S."/>
            <person name="Beckerich J.-M."/>
            <person name="Beyne E."/>
            <person name="Bleykasten C."/>
            <person name="Boisrame A."/>
            <person name="Boyer J."/>
            <person name="Cattolico L."/>
            <person name="Confanioleri F."/>
            <person name="de Daruvar A."/>
            <person name="Despons L."/>
            <person name="Fabre E."/>
            <person name="Fairhead C."/>
            <person name="Ferry-Dumazet H."/>
            <person name="Groppi A."/>
            <person name="Hantraye F."/>
            <person name="Hennequin C."/>
            <person name="Jauniaux N."/>
            <person name="Joyet P."/>
            <person name="Kachouri R."/>
            <person name="Kerrest A."/>
            <person name="Koszul R."/>
            <person name="Lemaire M."/>
            <person name="Lesur I."/>
            <person name="Ma L."/>
            <person name="Muller H."/>
            <person name="Nicaud J.-M."/>
            <person name="Nikolski M."/>
            <person name="Oztas S."/>
            <person name="Ozier-Kalogeropoulos O."/>
            <person name="Pellenz S."/>
            <person name="Potier S."/>
            <person name="Richard G.-F."/>
            <person name="Straub M.-L."/>
            <person name="Suleau A."/>
            <person name="Swennen D."/>
            <person name="Tekaia F."/>
            <person name="Wesolowski-Louvel M."/>
            <person name="Westhof E."/>
            <person name="Wirth B."/>
            <person name="Zeniou-Meyer M."/>
            <person name="Zivanovic Y."/>
            <person name="Bolotin-Fukuhara M."/>
            <person name="Thierry A."/>
            <person name="Bouchier C."/>
            <person name="Caudron B."/>
            <person name="Scarpelli C."/>
            <person name="Gaillardin C."/>
            <person name="Weissenbach J."/>
            <person name="Wincker P."/>
            <person name="Souciet J.-L."/>
        </authorList>
    </citation>
    <scope>NUCLEOTIDE SEQUENCE [LARGE SCALE GENOMIC DNA]</scope>
    <source>
        <strain>ATCC 36239 / CBS 767 / BCRC 21394 / JCM 1990 / NBRC 0083 / IGC 2968</strain>
    </source>
</reference>
<proteinExistence type="inferred from homology"/>
<protein>
    <recommendedName>
        <fullName>DNA replication complex GINS protein PSF1</fullName>
    </recommendedName>
</protein>
<gene>
    <name type="primary">PSF1</name>
    <name type="ordered locus">DEHA2F21802g</name>
</gene>
<name>PSF1_DEBHA</name>
<accession>Q6BKI2</accession>
<sequence>MYGNLANKLILDAKRSSNLSETPLYQTDLVKSIIKETTDLNKDAEYLGEEQRIQEEDSENADEEKMKINQCQLFVTHLCMRRNKRCLLAYEKLRADKIDEFSWLNIDPITETGNTDPNKNKFGSTGNGSNSLVSNSANYTTQLNLDNLNHAEQEYYKNYQHLITNYKSNFADIDLSGDLDPPTNIFTDVRVLKNGGEVQTEYGVFNLIKDSQFYVRKSDVERLIQQGYLEEI</sequence>
<organism>
    <name type="scientific">Debaryomyces hansenii (strain ATCC 36239 / CBS 767 / BCRC 21394 / JCM 1990 / NBRC 0083 / IGC 2968)</name>
    <name type="common">Yeast</name>
    <name type="synonym">Torulaspora hansenii</name>
    <dbReference type="NCBI Taxonomy" id="284592"/>
    <lineage>
        <taxon>Eukaryota</taxon>
        <taxon>Fungi</taxon>
        <taxon>Dikarya</taxon>
        <taxon>Ascomycota</taxon>
        <taxon>Saccharomycotina</taxon>
        <taxon>Pichiomycetes</taxon>
        <taxon>Debaryomycetaceae</taxon>
        <taxon>Debaryomyces</taxon>
    </lineage>
</organism>
<comment type="function">
    <text evidence="1">The GINS complex plays an essential role in the initiation of DNA replication.</text>
</comment>
<comment type="subunit">
    <text evidence="1">Component of the GINS complex which is a heterotetramer of SLD5, PSF1, PSF2 and PSF3.</text>
</comment>
<comment type="subcellular location">
    <subcellularLocation>
        <location evidence="1">Nucleus</location>
    </subcellularLocation>
</comment>
<comment type="similarity">
    <text evidence="2">Belongs to the GINS1/PSF1 family.</text>
</comment>
<evidence type="ECO:0000250" key="1"/>
<evidence type="ECO:0000305" key="2"/>
<dbReference type="EMBL" id="CR382138">
    <property type="protein sequence ID" value="CAG89690.1"/>
    <property type="molecule type" value="Genomic_DNA"/>
</dbReference>
<dbReference type="RefSeq" id="XP_461289.1">
    <property type="nucleotide sequence ID" value="XM_461289.1"/>
</dbReference>
<dbReference type="SMR" id="Q6BKI2"/>
<dbReference type="FunCoup" id="Q6BKI2">
    <property type="interactions" value="459"/>
</dbReference>
<dbReference type="STRING" id="284592.Q6BKI2"/>
<dbReference type="GeneID" id="2903457"/>
<dbReference type="KEGG" id="dha:DEHA2F21802g"/>
<dbReference type="VEuPathDB" id="FungiDB:DEHA2F21802g"/>
<dbReference type="eggNOG" id="KOG3303">
    <property type="taxonomic scope" value="Eukaryota"/>
</dbReference>
<dbReference type="HOGENOM" id="CLU_079191_0_0_1"/>
<dbReference type="InParanoid" id="Q6BKI2"/>
<dbReference type="OMA" id="MFCEKAT"/>
<dbReference type="OrthoDB" id="10252587at2759"/>
<dbReference type="Proteomes" id="UP000000599">
    <property type="component" value="Chromosome F"/>
</dbReference>
<dbReference type="GO" id="GO:0071162">
    <property type="term" value="C:CMG complex"/>
    <property type="evidence" value="ECO:0007669"/>
    <property type="project" value="EnsemblFungi"/>
</dbReference>
<dbReference type="GO" id="GO:0000811">
    <property type="term" value="C:GINS complex"/>
    <property type="evidence" value="ECO:0007669"/>
    <property type="project" value="EnsemblFungi"/>
</dbReference>
<dbReference type="GO" id="GO:0043596">
    <property type="term" value="C:nuclear replication fork"/>
    <property type="evidence" value="ECO:0007669"/>
    <property type="project" value="EnsemblFungi"/>
</dbReference>
<dbReference type="GO" id="GO:1902983">
    <property type="term" value="P:DNA strand elongation involved in mitotic DNA replication"/>
    <property type="evidence" value="ECO:0007669"/>
    <property type="project" value="EnsemblFungi"/>
</dbReference>
<dbReference type="GO" id="GO:0000727">
    <property type="term" value="P:double-strand break repair via break-induced replication"/>
    <property type="evidence" value="ECO:0007669"/>
    <property type="project" value="EnsemblFungi"/>
</dbReference>
<dbReference type="GO" id="GO:1902975">
    <property type="term" value="P:mitotic DNA replication initiation"/>
    <property type="evidence" value="ECO:0007669"/>
    <property type="project" value="EnsemblFungi"/>
</dbReference>
<dbReference type="CDD" id="cd11710">
    <property type="entry name" value="GINS_A_psf1"/>
    <property type="match status" value="1"/>
</dbReference>
<dbReference type="CDD" id="cd21696">
    <property type="entry name" value="GINS_B_Psf1"/>
    <property type="match status" value="1"/>
</dbReference>
<dbReference type="Gene3D" id="1.20.58.1030">
    <property type="match status" value="1"/>
</dbReference>
<dbReference type="InterPro" id="IPR021151">
    <property type="entry name" value="GINS_A"/>
</dbReference>
<dbReference type="InterPro" id="IPR036224">
    <property type="entry name" value="GINS_bundle-like_dom_sf"/>
</dbReference>
<dbReference type="InterPro" id="IPR005339">
    <property type="entry name" value="GINS_Psf1"/>
</dbReference>
<dbReference type="InterPro" id="IPR056783">
    <property type="entry name" value="PSF1_C"/>
</dbReference>
<dbReference type="PANTHER" id="PTHR12914:SF2">
    <property type="entry name" value="DNA REPLICATION COMPLEX GINS PROTEIN PSF1"/>
    <property type="match status" value="1"/>
</dbReference>
<dbReference type="PANTHER" id="PTHR12914">
    <property type="entry name" value="PARTNER OF SLD5"/>
    <property type="match status" value="1"/>
</dbReference>
<dbReference type="Pfam" id="PF24997">
    <property type="entry name" value="PSF1_C"/>
    <property type="match status" value="1"/>
</dbReference>
<dbReference type="Pfam" id="PF05916">
    <property type="entry name" value="Sld5"/>
    <property type="match status" value="1"/>
</dbReference>
<dbReference type="SUPFAM" id="SSF158573">
    <property type="entry name" value="GINS helical bundle-like"/>
    <property type="match status" value="1"/>
</dbReference>
<keyword id="KW-0235">DNA replication</keyword>
<keyword id="KW-0539">Nucleus</keyword>
<keyword id="KW-1185">Reference proteome</keyword>